<protein>
    <recommendedName>
        <fullName evidence="1">D-(-)-3-hydroxybutyrate oligomer hydrolase</fullName>
        <shortName evidence="1">3HB-oligomer hydrolase</shortName>
        <shortName evidence="1">3HBOH</shortName>
        <ecNumber evidence="1">3.1.1.22</ecNumber>
    </recommendedName>
</protein>
<name>HBOH_PARXL</name>
<proteinExistence type="inferred from homology"/>
<accession>Q13Q76</accession>
<dbReference type="EC" id="3.1.1.22" evidence="1"/>
<dbReference type="EMBL" id="CP000271">
    <property type="protein sequence ID" value="ABE33763.1"/>
    <property type="molecule type" value="Genomic_DNA"/>
</dbReference>
<dbReference type="RefSeq" id="WP_011491122.1">
    <property type="nucleotide sequence ID" value="NC_007952.1"/>
</dbReference>
<dbReference type="STRING" id="266265.Bxe_B2223"/>
<dbReference type="ESTHER" id="parxl-hboh">
    <property type="family name" value="OHBut_olig_hydro_put"/>
</dbReference>
<dbReference type="KEGG" id="bxb:DR64_4554"/>
<dbReference type="KEGG" id="bxe:Bxe_B2223"/>
<dbReference type="PATRIC" id="fig|266265.5.peg.5493"/>
<dbReference type="eggNOG" id="ENOG502Z8QU">
    <property type="taxonomic scope" value="Bacteria"/>
</dbReference>
<dbReference type="OrthoDB" id="4294477at2"/>
<dbReference type="UniPathway" id="UPA00863"/>
<dbReference type="Proteomes" id="UP000001817">
    <property type="component" value="Chromosome 2"/>
</dbReference>
<dbReference type="GO" id="GO:0005615">
    <property type="term" value="C:extracellular space"/>
    <property type="evidence" value="ECO:0007669"/>
    <property type="project" value="InterPro"/>
</dbReference>
<dbReference type="GO" id="GO:0047989">
    <property type="term" value="F:hydroxybutyrate-dimer hydrolase activity"/>
    <property type="evidence" value="ECO:0007669"/>
    <property type="project" value="UniProtKB-UniRule"/>
</dbReference>
<dbReference type="GO" id="GO:0019605">
    <property type="term" value="P:butyrate metabolic process"/>
    <property type="evidence" value="ECO:0007669"/>
    <property type="project" value="UniProtKB-UniRule"/>
</dbReference>
<dbReference type="HAMAP" id="MF_01906">
    <property type="entry name" value="3HBOH"/>
    <property type="match status" value="1"/>
</dbReference>
<dbReference type="InterPro" id="IPR016582">
    <property type="entry name" value="OHBut_olig_hydro_put"/>
</dbReference>
<dbReference type="Pfam" id="PF10605">
    <property type="entry name" value="3HBOH"/>
    <property type="match status" value="1"/>
</dbReference>
<dbReference type="PIRSF" id="PIRSF011409">
    <property type="entry name" value="HObutyrate_olig_hydrol"/>
    <property type="match status" value="1"/>
</dbReference>
<gene>
    <name type="ordered locus">Bxeno_B0795</name>
    <name type="ORF">Bxe_B2223</name>
</gene>
<evidence type="ECO:0000255" key="1">
    <source>
        <dbReference type="HAMAP-Rule" id="MF_01906"/>
    </source>
</evidence>
<organism>
    <name type="scientific">Paraburkholderia xenovorans (strain LB400)</name>
    <dbReference type="NCBI Taxonomy" id="266265"/>
    <lineage>
        <taxon>Bacteria</taxon>
        <taxon>Pseudomonadati</taxon>
        <taxon>Pseudomonadota</taxon>
        <taxon>Betaproteobacteria</taxon>
        <taxon>Burkholderiales</taxon>
        <taxon>Burkholderiaceae</taxon>
        <taxon>Paraburkholderia</taxon>
    </lineage>
</organism>
<comment type="function">
    <text evidence="1">Participates in the degradation of poly-3-hydroxybutyrate (PHB). It works downstream of poly(3-hydroxybutyrate) depolymerase, hydrolyzing D(-)-3-hydroxybutyrate oligomers of various length (3HB-oligomers) into 3HB-monomers.</text>
</comment>
<comment type="catalytic activity">
    <reaction evidence="1">
        <text>(3R)-hydroxybutanoate dimer + H2O = 2 (R)-3-hydroxybutanoate + H(+)</text>
        <dbReference type="Rhea" id="RHEA:10172"/>
        <dbReference type="ChEBI" id="CHEBI:10979"/>
        <dbReference type="ChEBI" id="CHEBI:10983"/>
        <dbReference type="ChEBI" id="CHEBI:15377"/>
        <dbReference type="ChEBI" id="CHEBI:15378"/>
        <dbReference type="EC" id="3.1.1.22"/>
    </reaction>
</comment>
<comment type="pathway">
    <text evidence="1">Lipid metabolism; butanoate metabolism.</text>
</comment>
<comment type="subcellular location">
    <subcellularLocation>
        <location evidence="1">Secreted</location>
    </subcellularLocation>
</comment>
<comment type="similarity">
    <text evidence="1">Belongs to the D-(-)-3-hydroxybutyrate oligomer hydrolase family.</text>
</comment>
<reference key="1">
    <citation type="journal article" date="2006" name="Proc. Natl. Acad. Sci. U.S.A.">
        <title>Burkholderia xenovorans LB400 harbors a multi-replicon, 9.73-Mbp genome shaped for versatility.</title>
        <authorList>
            <person name="Chain P.S.G."/>
            <person name="Denef V.J."/>
            <person name="Konstantinidis K.T."/>
            <person name="Vergez L.M."/>
            <person name="Agullo L."/>
            <person name="Reyes V.L."/>
            <person name="Hauser L."/>
            <person name="Cordova M."/>
            <person name="Gomez L."/>
            <person name="Gonzalez M."/>
            <person name="Land M."/>
            <person name="Lao V."/>
            <person name="Larimer F."/>
            <person name="LiPuma J.J."/>
            <person name="Mahenthiralingam E."/>
            <person name="Malfatti S.A."/>
            <person name="Marx C.J."/>
            <person name="Parnell J.J."/>
            <person name="Ramette A."/>
            <person name="Richardson P."/>
            <person name="Seeger M."/>
            <person name="Smith D."/>
            <person name="Spilker T."/>
            <person name="Sul W.J."/>
            <person name="Tsoi T.V."/>
            <person name="Ulrich L.E."/>
            <person name="Zhulin I.B."/>
            <person name="Tiedje J.M."/>
        </authorList>
    </citation>
    <scope>NUCLEOTIDE SEQUENCE [LARGE SCALE GENOMIC DNA]</scope>
    <source>
        <strain>LB400</strain>
    </source>
</reference>
<keyword id="KW-0378">Hydrolase</keyword>
<keyword id="KW-1185">Reference proteome</keyword>
<keyword id="KW-0964">Secreted</keyword>
<keyword id="KW-0732">Signal</keyword>
<feature type="signal peptide" evidence="1">
    <location>
        <begin position="1"/>
        <end position="32"/>
    </location>
</feature>
<feature type="chain" id="PRO_0000314427" description="D-(-)-3-hydroxybutyrate oligomer hydrolase">
    <location>
        <begin position="33"/>
        <end position="707"/>
    </location>
</feature>
<feature type="active site" description="Charge relay system" evidence="1">
    <location>
        <position position="321"/>
    </location>
</feature>
<sequence>MASVFKVRSASGHVPVVRTLAAMMAVTVVLTACHGGGDNHPPPQANVLPAFITASSVRTQFYDGNTDDLLTAGLGKTGLASATAPAIANAAQPTAAELRRLAIWSNYRALVDMTANGGYGRFWGPNVDLNGNDTLGEGKIAGKEYLAFADDGSGTQNVTVLVQIPASFNPDQPCIVTATSSGSRGVYGAISAAGEWGLKRGCAVAYTDKGSGNGAHELSSSLVTLIDGTLQNATAAGKASLFTANLGNTDLASYNSRFPNRYAFKHAHSQQNPEKDWGRNTLQAIQFAYWALNDSYGTLNGSTRNVRYTSGSITTIAASVSNGGGASLAAAEQDTSGLITAVVVGEPQINLRLPAQVSVAQGGVPVGAFGKPLADYMTLANMLQPCAALAPAAAGAPYLTALPGATTTSIRTARCASLAAAGVIAGADATTQATNALALLHQNGYQTDSDLLQAPMWDSQAVPAVAVTYADAYAKASVTANLCNFSFGTTNAAGTAGVTPAVSPMLTVFGNGNGVPPTNGINLVFNSGAGAADHRLATADGSYAGASCLRTLWTNGTLTGSVDAIRVNANLHGKPAIIVQGRADALVPINHASRPYLGLNQLSEGAASRLSFYEVTNAQHFDAFLGVAGFDSRFVPLHYYNLQALNLMWSHLKNGTPLPPSQVIHTVPRGGTPGAAPALTTANLPPIVASPGINAITAANGAVNVPN</sequence>